<proteinExistence type="evidence at transcript level"/>
<evidence type="ECO:0000250" key="1">
    <source>
        <dbReference type="UniProtKB" id="O35405"/>
    </source>
</evidence>
<evidence type="ECO:0000250" key="2">
    <source>
        <dbReference type="UniProtKB" id="Q8BG07"/>
    </source>
</evidence>
<evidence type="ECO:0000250" key="3">
    <source>
        <dbReference type="UniProtKB" id="Q8IV08"/>
    </source>
</evidence>
<evidence type="ECO:0000255" key="4">
    <source>
        <dbReference type="PROSITE-ProRule" id="PRU00153"/>
    </source>
</evidence>
<evidence type="ECO:0000305" key="5"/>
<accession>Q2KJJ8</accession>
<name>PLD3_BOVIN</name>
<comment type="function">
    <text evidence="1 3">5'-&gt;3' exonuclease that hydrolyzes the phosphodiester bond of single-stranded DNA (ssDNA) and RNA molecules to form nucleoside 3'-monophosphates and 5'-end 5'-hydroxy deoxyribonucleotide/ribonucleotide fragments. Partially redundant with PLD4, can cleave all four nucleotides displaying higher efficiency for ssDNA and RNA fragments initiated with uridine and guanosine residues and lower efficiency for cytidine-initiated substrates. As a result, it does not always degrade polynucleotides to the single nucleotide level, it can stall at specific sites sparing certain fragments from exonucleolytic degradation. Processes self and pathogenic ssDNA and RNA molecules that reach the endolysosomal compartment via phagocytosis or autophagy and may serve as 'danger' signals for recognition by innate immune receptors such as toll-like receptors (TLRs). Degrades mitochondrial CpG-rich ssDNA fragments to prevent TLR9 activation and autoinflammatory response, but it can cleave viral RNA to generate ligands for TLR7 activation and initiate antiviral immune responses. In plasmacytoid dendritic cells, it cooperates with endonuclease RNASET2 to release 2',3'-cyclic guanosine monophosphate (2',3'-cGMP), a potent stimulatory ligand for TLR7. Produces 2',3'-cGMPs and cytidine-rich RNA fragments that occupy TLR7 ligand-binding pockets and trigger a signaling-competent state. Can exert polynucleotide phosphatase activity toward 5'-phosphorylated ssDNA substrates although at a slow rate. Transphosphatidylase that catalyzes the exchange with R to S stereo-inversion of the glycerol moiety between (S,R)-lysophosphatidylglycerol (LPG) and monoacylglycerol (MAG) substrates to yield (S,S)-bis(monoacylglycero)phosphate (BMP). Can synthesize a variety of (S,S)-BMPs representing the main phospholipid constituent of lysosomal intralumenal vesicle (ILV) membranes that bind acid hydrolases for lipid degradation. Regulates the homeostasis and interorganellar communication of the endolysosomal system with an overall impact on cellular removal of dysfunctional organelles via autophagy as well as proper protein and lipid turnover. May play a role in myotube formation in response to ER stress.</text>
</comment>
<comment type="catalytic activity">
    <reaction evidence="3">
        <text>Exonucleolytic cleavage in the 5'- to 3'-direction to yield nucleoside 3'-phosphates.</text>
        <dbReference type="EC" id="3.1.16.1"/>
    </reaction>
</comment>
<comment type="catalytic activity">
    <reaction evidence="3">
        <text>a 5'-end 5'-dephospho-ribonucleotidyl-ribonucleotide-RNA + H2O = a ribonucleoside 3'-phosphate + a 5'-end dephospho-ribonucleoside-RNA + H(+)</text>
        <dbReference type="Rhea" id="RHEA:81375"/>
        <dbReference type="Rhea" id="RHEA-COMP:13936"/>
        <dbReference type="Rhea" id="RHEA-COMP:19670"/>
        <dbReference type="ChEBI" id="CHEBI:13197"/>
        <dbReference type="ChEBI" id="CHEBI:15377"/>
        <dbReference type="ChEBI" id="CHEBI:15378"/>
        <dbReference type="ChEBI" id="CHEBI:138284"/>
        <dbReference type="ChEBI" id="CHEBI:231871"/>
    </reaction>
    <physiologicalReaction direction="left-to-right" evidence="3">
        <dbReference type="Rhea" id="RHEA:81376"/>
    </physiologicalReaction>
</comment>
<comment type="catalytic activity">
    <reaction evidence="3">
        <text>a ribonucleoside 3'-phosphate-2'-3'-cyclophospho-GMP + H2O = a ribonucleoside 3'-phosphate + 2',3'-cyclophospho-GMP + H(+)</text>
        <dbReference type="Rhea" id="RHEA:81319"/>
        <dbReference type="ChEBI" id="CHEBI:13197"/>
        <dbReference type="ChEBI" id="CHEBI:15377"/>
        <dbReference type="ChEBI" id="CHEBI:15378"/>
        <dbReference type="ChEBI" id="CHEBI:60837"/>
        <dbReference type="ChEBI" id="CHEBI:231870"/>
    </reaction>
    <physiologicalReaction direction="left-to-right" evidence="3">
        <dbReference type="Rhea" id="RHEA:81320"/>
    </physiologicalReaction>
</comment>
<comment type="catalytic activity">
    <reaction evidence="3">
        <text>a 5'-end 5'-dephospho-2'-deoxyribonucleotidyl-2'-deoxyribonucleotide in single-stranded DNA + H2O = a 5'-end dephospho-2'-deoxyribonucleoside in single-stranded DNA + a 2'-deoxyribonucleoside 3'-phosphate + H(+)</text>
        <dbReference type="Rhea" id="RHEA:81379"/>
        <dbReference type="Rhea" id="RHEA-COMP:19701"/>
        <dbReference type="Rhea" id="RHEA-COMP:19702"/>
        <dbReference type="ChEBI" id="CHEBI:15377"/>
        <dbReference type="ChEBI" id="CHEBI:15378"/>
        <dbReference type="ChEBI" id="CHEBI:131705"/>
        <dbReference type="ChEBI" id="CHEBI:136416"/>
        <dbReference type="ChEBI" id="CHEBI:231873"/>
    </reaction>
    <physiologicalReaction direction="left-to-right" evidence="3">
        <dbReference type="Rhea" id="RHEA:81380"/>
    </physiologicalReaction>
</comment>
<comment type="catalytic activity">
    <reaction evidence="3">
        <text>a 5'-end 5'-phospho-2'-deoxyribonucleotide in single-stranded DNA + H2O = a 5'-end 5'-dephospho-2'-deoxyribonucleotide in single-stranded DNA + phosphate</text>
        <dbReference type="Rhea" id="RHEA:82335"/>
        <dbReference type="Rhea" id="RHEA-COMP:19868"/>
        <dbReference type="Rhea" id="RHEA-COMP:19869"/>
        <dbReference type="ChEBI" id="CHEBI:15377"/>
        <dbReference type="ChEBI" id="CHEBI:43474"/>
        <dbReference type="ChEBI" id="CHEBI:136412"/>
        <dbReference type="ChEBI" id="CHEBI:136416"/>
    </reaction>
    <physiologicalReaction direction="left-to-right" evidence="3">
        <dbReference type="Rhea" id="RHEA:82336"/>
    </physiologicalReaction>
</comment>
<comment type="catalytic activity">
    <reaction evidence="3">
        <text>a 3-lyso-sn-glycero-1-phospho-(3'-acyl-1'-sn-glycerol) + a 1-acyl-sn-glycerol = a 3-acyl-sn-glycero-1-phospho-(3'-acyl-1'-sn-glycerol) + glycerol</text>
        <dbReference type="Rhea" id="RHEA:82563"/>
        <dbReference type="ChEBI" id="CHEBI:17754"/>
        <dbReference type="ChEBI" id="CHEBI:64683"/>
        <dbReference type="ChEBI" id="CHEBI:77717"/>
        <dbReference type="ChEBI" id="CHEBI:232393"/>
    </reaction>
    <physiologicalReaction direction="left-to-right" evidence="3">
        <dbReference type="Rhea" id="RHEA:82564"/>
    </physiologicalReaction>
</comment>
<comment type="catalytic activity">
    <reaction evidence="3">
        <text>3-lyso-sn-glycero-1-phospho-(3'-(9Z-octadecenoyl)-1'-sn-glycerol) + 1-(9Z-octadecenoyl)-sn-glycerol = 3-(9Z-octadecenoyl)-sn-glycero-1-phospho-(3'-(9Z-octadecenoyl)-1'-sn-glycerol) + glycerol</text>
        <dbReference type="Rhea" id="RHEA:82567"/>
        <dbReference type="ChEBI" id="CHEBI:17754"/>
        <dbReference type="ChEBI" id="CHEBI:75757"/>
        <dbReference type="ChEBI" id="CHEBI:139150"/>
        <dbReference type="ChEBI" id="CHEBI:232394"/>
    </reaction>
    <physiologicalReaction direction="left-to-right" evidence="3">
        <dbReference type="Rhea" id="RHEA:82568"/>
    </physiologicalReaction>
</comment>
<comment type="subunit">
    <text evidence="3">Homodimer. Interacts with APP.</text>
</comment>
<comment type="subcellular location">
    <subcellularLocation>
        <location evidence="3">Endoplasmic reticulum membrane</location>
        <topology evidence="3">Single-pass type II membrane protein</topology>
    </subcellularLocation>
    <subcellularLocation>
        <location evidence="3">Lysosome lumen</location>
    </subcellularLocation>
    <subcellularLocation>
        <location evidence="3">Early endosome membrane</location>
        <topology evidence="3">Single-pass type II membrane protein</topology>
    </subcellularLocation>
    <subcellularLocation>
        <location evidence="3">Late endosome membrane</location>
        <topology evidence="3">Single-pass type II membrane protein</topology>
    </subcellularLocation>
    <subcellularLocation>
        <location evidence="3">Golgi apparatus membrane</location>
        <topology evidence="3">Single-pass type II membrane protein</topology>
    </subcellularLocation>
    <subcellularLocation>
        <location evidence="3">Endosome membrane</location>
        <topology evidence="3">Single-pass type II membrane protein</topology>
    </subcellularLocation>
    <text evidence="3">Localizes to ER-associated vesicles in differentiating myotubes. Sorted into intralumenal vesicles (ILVs) in lysosomes. The soluble form in lysosome arises by proteolytic processing of the membrane-bound form. Colocalizes with APP in endosomes.</text>
</comment>
<comment type="domain">
    <text evidence="3">The catalytic domain contains two conserved PLD phosphodiesterase HxK(x4)D(E) motifs that accomodate the phosphate group of the nucleic acid substrates, with one nucleophile histidine residue forming a phosphohistidine intermediate and the other histidine protonating the leaving 5'-OH ssDNA/RNA fragment, resulting in the cleavage of the phosphodiester bond. The homodimer has two independent catalytic domains arranged at the dimer interface.</text>
</comment>
<comment type="PTM">
    <text evidence="3">N-glycosylated.</text>
</comment>
<comment type="PTM">
    <text evidence="3">Proteolytically processed to a soluble form that is stable within endosomes and lysosomes. During transport through the secretory pathway becomes proteolysed by cysteine proteases, thereby releasing a stable soluble lysosomal lumenal polypeptide, whereas the transmembrane-bound fragment is rapidly degraded. Its transport route to lysosomes involves ubiquitination and the ESCRT complex.</text>
</comment>
<comment type="PTM">
    <text evidence="3">Ubiquitinated. Ubiquitination mediates sorting into lysosomes.</text>
</comment>
<comment type="similarity">
    <text evidence="5">Belongs to the phospholipase D family.</text>
</comment>
<comment type="caution">
    <text evidence="1 2">It was initially thought that PDL3 has phospholipase D activity due to its HKD motifs. The second HKD motif contains Glu instead of the canonical Asp. Its enzyme activity is therefore unsure. Catalytic phospholipase D activity is still controversial (By similarity). Its closest homolog PLD4, exhibits no phospholipase activity (By similarity).</text>
</comment>
<protein>
    <recommendedName>
        <fullName>5'-3' exonuclease PLD3</fullName>
        <ecNumber evidence="3">3.1.16.1</ecNumber>
    </recommendedName>
    <alternativeName>
        <fullName>(S,S)-bis(monoacylglycero)phosphate synthase PLD3</fullName>
        <ecNumber evidence="3">3.1.4.-</ecNumber>
    </alternativeName>
    <alternativeName>
        <fullName>Phospholipase D3</fullName>
    </alternativeName>
</protein>
<feature type="chain" id="PRO_0000280325" description="5'-3' exonuclease PLD3">
    <location>
        <begin position="1"/>
        <end position="490"/>
    </location>
</feature>
<feature type="topological domain" description="Cytoplasmic" evidence="3">
    <location>
        <begin position="1"/>
        <end position="38"/>
    </location>
</feature>
<feature type="transmembrane region" description="Helical; Signal-anchor for type II membrane protein" evidence="3">
    <location>
        <begin position="39"/>
        <end position="59"/>
    </location>
</feature>
<feature type="topological domain" description="Lumenal" evidence="3">
    <location>
        <begin position="60"/>
        <end position="490"/>
    </location>
</feature>
<feature type="domain" description="PLD phosphodiesterase 1" evidence="4">
    <location>
        <begin position="196"/>
        <end position="223"/>
    </location>
</feature>
<feature type="domain" description="PLD phosphodiesterase 2" evidence="4">
    <location>
        <begin position="411"/>
        <end position="437"/>
    </location>
</feature>
<feature type="active site" evidence="4">
    <location>
        <position position="201"/>
    </location>
</feature>
<feature type="active site" description="Proton donor" evidence="4">
    <location>
        <position position="201"/>
    </location>
</feature>
<feature type="active site" evidence="4">
    <location>
        <position position="203"/>
    </location>
</feature>
<feature type="active site" evidence="4">
    <location>
        <position position="208"/>
    </location>
</feature>
<feature type="active site" description="Nucleophile" evidence="1">
    <location>
        <position position="416"/>
    </location>
</feature>
<feature type="binding site" evidence="1">
    <location>
        <position position="201"/>
    </location>
    <ligand>
        <name>phosphate</name>
        <dbReference type="ChEBI" id="CHEBI:43474"/>
    </ligand>
    <ligandPart>
        <name>5'-phosphate 2'-deoxynucleoside residue</name>
        <dbReference type="ChEBI" id="CHEBI:136412"/>
    </ligandPart>
</feature>
<feature type="binding site" evidence="1">
    <location>
        <position position="203"/>
    </location>
    <ligand>
        <name>phosphate</name>
        <dbReference type="ChEBI" id="CHEBI:43474"/>
    </ligand>
    <ligandPart>
        <name>5'-phosphate 2'-deoxynucleoside residue</name>
        <dbReference type="ChEBI" id="CHEBI:136412"/>
    </ligandPart>
</feature>
<feature type="binding site" evidence="1">
    <location>
        <position position="218"/>
    </location>
    <ligand>
        <name>phosphate</name>
        <dbReference type="ChEBI" id="CHEBI:43474"/>
    </ligand>
    <ligandPart>
        <name>5'-phosphate 2'-deoxynucleoside residue</name>
        <dbReference type="ChEBI" id="CHEBI:136412"/>
    </ligandPart>
</feature>
<feature type="binding site" evidence="1">
    <location>
        <position position="416"/>
    </location>
    <ligand>
        <name>phosphate</name>
        <dbReference type="ChEBI" id="CHEBI:43474"/>
    </ligand>
    <ligandPart>
        <name>5'-phosphate 2'-deoxynucleoside residue</name>
        <dbReference type="ChEBI" id="CHEBI:136412"/>
    </ligandPart>
</feature>
<feature type="binding site" evidence="3">
    <location>
        <position position="438"/>
    </location>
    <ligand>
        <name>Mg(2+)</name>
        <dbReference type="ChEBI" id="CHEBI:18420"/>
    </ligand>
</feature>
<feature type="site" description="Cleavage; by lysosomal cysteine proteases" evidence="3">
    <location>
        <begin position="71"/>
        <end position="72"/>
    </location>
</feature>
<feature type="glycosylation site" description="N-linked (GlcNAc...) asparagine" evidence="3">
    <location>
        <position position="97"/>
    </location>
</feature>
<feature type="glycosylation site" description="N-linked (GlcNAc...) asparagine" evidence="3">
    <location>
        <position position="132"/>
    </location>
</feature>
<feature type="glycosylation site" description="N-linked (GlcNAc...) asparagine" evidence="3">
    <location>
        <position position="236"/>
    </location>
</feature>
<feature type="glycosylation site" description="N-linked (GlcNAc...) asparagine" evidence="3">
    <location>
        <position position="284"/>
    </location>
</feature>
<feature type="glycosylation site" description="N-linked (GlcNAc...) asparagine" evidence="3">
    <location>
        <position position="387"/>
    </location>
</feature>
<feature type="disulfide bond" evidence="1">
    <location>
        <begin position="77"/>
        <end position="239"/>
    </location>
</feature>
<feature type="disulfide bond" evidence="1">
    <location>
        <begin position="81"/>
        <end position="237"/>
    </location>
</feature>
<feature type="disulfide bond" evidence="1">
    <location>
        <begin position="366"/>
        <end position="487"/>
    </location>
</feature>
<keyword id="KW-1015">Disulfide bond</keyword>
<keyword id="KW-0256">Endoplasmic reticulum</keyword>
<keyword id="KW-0967">Endosome</keyword>
<keyword id="KW-0269">Exonuclease</keyword>
<keyword id="KW-0325">Glycoprotein</keyword>
<keyword id="KW-0333">Golgi apparatus</keyword>
<keyword id="KW-0378">Hydrolase</keyword>
<keyword id="KW-0391">Immunity</keyword>
<keyword id="KW-0395">Inflammatory response</keyword>
<keyword id="KW-0443">Lipid metabolism</keyword>
<keyword id="KW-0458">Lysosome</keyword>
<keyword id="KW-0460">Magnesium</keyword>
<keyword id="KW-0472">Membrane</keyword>
<keyword id="KW-0479">Metal-binding</keyword>
<keyword id="KW-0540">Nuclease</keyword>
<keyword id="KW-1208">Phospholipid metabolism</keyword>
<keyword id="KW-1185">Reference proteome</keyword>
<keyword id="KW-0677">Repeat</keyword>
<keyword id="KW-0735">Signal-anchor</keyword>
<keyword id="KW-0812">Transmembrane</keyword>
<keyword id="KW-1133">Transmembrane helix</keyword>
<keyword id="KW-0832">Ubl conjugation</keyword>
<reference key="1">
    <citation type="submission" date="2005-09" db="EMBL/GenBank/DDBJ databases">
        <authorList>
            <consortium name="NIH - Mammalian Gene Collection (MGC) project"/>
        </authorList>
    </citation>
    <scope>NUCLEOTIDE SEQUENCE [LARGE SCALE MRNA]</scope>
    <source>
        <strain>Crossbred X Angus</strain>
        <tissue>Ileum</tissue>
    </source>
</reference>
<organism>
    <name type="scientific">Bos taurus</name>
    <name type="common">Bovine</name>
    <dbReference type="NCBI Taxonomy" id="9913"/>
    <lineage>
        <taxon>Eukaryota</taxon>
        <taxon>Metazoa</taxon>
        <taxon>Chordata</taxon>
        <taxon>Craniata</taxon>
        <taxon>Vertebrata</taxon>
        <taxon>Euteleostomi</taxon>
        <taxon>Mammalia</taxon>
        <taxon>Eutheria</taxon>
        <taxon>Laurasiatheria</taxon>
        <taxon>Artiodactyla</taxon>
        <taxon>Ruminantia</taxon>
        <taxon>Pecora</taxon>
        <taxon>Bovidae</taxon>
        <taxon>Bovinae</taxon>
        <taxon>Bos</taxon>
    </lineage>
</organism>
<dbReference type="EC" id="3.1.16.1" evidence="3"/>
<dbReference type="EC" id="3.1.4.-" evidence="3"/>
<dbReference type="EMBL" id="BC105309">
    <property type="protein sequence ID" value="AAI05310.1"/>
    <property type="molecule type" value="mRNA"/>
</dbReference>
<dbReference type="RefSeq" id="NP_001071509.1">
    <property type="nucleotide sequence ID" value="NM_001078041.2"/>
</dbReference>
<dbReference type="RefSeq" id="XP_005219060.1">
    <property type="nucleotide sequence ID" value="XM_005219003.5"/>
</dbReference>
<dbReference type="RefSeq" id="XP_005219061.1">
    <property type="nucleotide sequence ID" value="XM_005219004.3"/>
</dbReference>
<dbReference type="RefSeq" id="XP_005219062.1">
    <property type="nucleotide sequence ID" value="XM_005219005.4"/>
</dbReference>
<dbReference type="RefSeq" id="XP_024834244.1">
    <property type="nucleotide sequence ID" value="XM_024978476.2"/>
</dbReference>
<dbReference type="RefSeq" id="XP_059732871.1">
    <property type="nucleotide sequence ID" value="XM_059876888.1"/>
</dbReference>
<dbReference type="SMR" id="Q2KJJ8"/>
<dbReference type="FunCoup" id="Q2KJJ8">
    <property type="interactions" value="1201"/>
</dbReference>
<dbReference type="STRING" id="9913.ENSBTAP00000041666"/>
<dbReference type="GlyCosmos" id="Q2KJJ8">
    <property type="glycosylation" value="1 site, No reported glycans"/>
</dbReference>
<dbReference type="GlyGen" id="Q2KJJ8">
    <property type="glycosylation" value="1 site"/>
</dbReference>
<dbReference type="PaxDb" id="9913-ENSBTAP00000041666"/>
<dbReference type="Ensembl" id="ENSBTAT00000044153.4">
    <property type="protein sequence ID" value="ENSBTAP00000041666.2"/>
    <property type="gene ID" value="ENSBTAG00000019150.7"/>
</dbReference>
<dbReference type="GeneID" id="613932"/>
<dbReference type="KEGG" id="bta:613932"/>
<dbReference type="CTD" id="23646"/>
<dbReference type="VEuPathDB" id="HostDB:ENSBTAG00000019150"/>
<dbReference type="VGNC" id="VGNC:32997">
    <property type="gene designation" value="PLD3"/>
</dbReference>
<dbReference type="eggNOG" id="KOG3603">
    <property type="taxonomic scope" value="Eukaryota"/>
</dbReference>
<dbReference type="GeneTree" id="ENSGT00950000183059"/>
<dbReference type="HOGENOM" id="CLU_027021_0_0_1"/>
<dbReference type="InParanoid" id="Q2KJJ8"/>
<dbReference type="OMA" id="RDNHTHF"/>
<dbReference type="OrthoDB" id="1923775at2759"/>
<dbReference type="TreeFam" id="TF313378"/>
<dbReference type="Reactome" id="R-BTA-2029485">
    <property type="pathway name" value="Role of phospholipids in phagocytosis"/>
</dbReference>
<dbReference type="Proteomes" id="UP000009136">
    <property type="component" value="Chromosome 18"/>
</dbReference>
<dbReference type="Bgee" id="ENSBTAG00000019150">
    <property type="expression patterns" value="Expressed in adenohypophysis and 104 other cell types or tissues"/>
</dbReference>
<dbReference type="GO" id="GO:0031901">
    <property type="term" value="C:early endosome membrane"/>
    <property type="evidence" value="ECO:0000250"/>
    <property type="project" value="UniProtKB"/>
</dbReference>
<dbReference type="GO" id="GO:0005789">
    <property type="term" value="C:endoplasmic reticulum membrane"/>
    <property type="evidence" value="ECO:0000250"/>
    <property type="project" value="UniProtKB"/>
</dbReference>
<dbReference type="GO" id="GO:0000139">
    <property type="term" value="C:Golgi membrane"/>
    <property type="evidence" value="ECO:0000250"/>
    <property type="project" value="UniProtKB"/>
</dbReference>
<dbReference type="GO" id="GO:0031902">
    <property type="term" value="C:late endosome membrane"/>
    <property type="evidence" value="ECO:0000250"/>
    <property type="project" value="UniProtKB"/>
</dbReference>
<dbReference type="GO" id="GO:0043202">
    <property type="term" value="C:lysosomal lumen"/>
    <property type="evidence" value="ECO:0000250"/>
    <property type="project" value="UniProtKB"/>
</dbReference>
<dbReference type="GO" id="GO:0005765">
    <property type="term" value="C:lysosomal membrane"/>
    <property type="evidence" value="ECO:0007669"/>
    <property type="project" value="Ensembl"/>
</dbReference>
<dbReference type="GO" id="GO:0046872">
    <property type="term" value="F:metal ion binding"/>
    <property type="evidence" value="ECO:0007669"/>
    <property type="project" value="UniProtKB-KW"/>
</dbReference>
<dbReference type="GO" id="GO:0045145">
    <property type="term" value="F:single-stranded DNA 5'-3' DNA exonuclease activity"/>
    <property type="evidence" value="ECO:0000250"/>
    <property type="project" value="UniProtKB"/>
</dbReference>
<dbReference type="GO" id="GO:0002376">
    <property type="term" value="P:immune system process"/>
    <property type="evidence" value="ECO:0007669"/>
    <property type="project" value="UniProtKB-KW"/>
</dbReference>
<dbReference type="GO" id="GO:0006954">
    <property type="term" value="P:inflammatory response"/>
    <property type="evidence" value="ECO:0007669"/>
    <property type="project" value="UniProtKB-KW"/>
</dbReference>
<dbReference type="GO" id="GO:0006629">
    <property type="term" value="P:lipid metabolic process"/>
    <property type="evidence" value="ECO:0007669"/>
    <property type="project" value="UniProtKB-KW"/>
</dbReference>
<dbReference type="GO" id="GO:0014902">
    <property type="term" value="P:myotube differentiation"/>
    <property type="evidence" value="ECO:0000250"/>
    <property type="project" value="UniProtKB"/>
</dbReference>
<dbReference type="GO" id="GO:1900015">
    <property type="term" value="P:regulation of cytokine production involved in inflammatory response"/>
    <property type="evidence" value="ECO:0000250"/>
    <property type="project" value="UniProtKB"/>
</dbReference>
<dbReference type="CDD" id="cd09144">
    <property type="entry name" value="PLDc_vPLD3_1"/>
    <property type="match status" value="1"/>
</dbReference>
<dbReference type="FunFam" id="3.30.870.10:FF:000013">
    <property type="entry name" value="phospholipase D3 isoform X1"/>
    <property type="match status" value="1"/>
</dbReference>
<dbReference type="FunFam" id="3.30.870.10:FF:000019">
    <property type="entry name" value="phospholipase D3 isoform X1"/>
    <property type="match status" value="1"/>
</dbReference>
<dbReference type="Gene3D" id="3.30.870.10">
    <property type="entry name" value="Endonuclease Chain A"/>
    <property type="match status" value="2"/>
</dbReference>
<dbReference type="InterPro" id="IPR050874">
    <property type="entry name" value="Diverse_PLD-related"/>
</dbReference>
<dbReference type="InterPro" id="IPR032803">
    <property type="entry name" value="PLDc_3"/>
</dbReference>
<dbReference type="InterPro" id="IPR001736">
    <property type="entry name" value="PLipase_D/transphosphatidylase"/>
</dbReference>
<dbReference type="PANTHER" id="PTHR10185:SF16">
    <property type="entry name" value="5'-3' EXONUCLEASE PLD3"/>
    <property type="match status" value="1"/>
</dbReference>
<dbReference type="PANTHER" id="PTHR10185">
    <property type="entry name" value="PHOSPHOLIPASE D - RELATED"/>
    <property type="match status" value="1"/>
</dbReference>
<dbReference type="Pfam" id="PF13918">
    <property type="entry name" value="PLDc_3"/>
    <property type="match status" value="1"/>
</dbReference>
<dbReference type="SMART" id="SM00155">
    <property type="entry name" value="PLDc"/>
    <property type="match status" value="2"/>
</dbReference>
<dbReference type="SUPFAM" id="SSF56024">
    <property type="entry name" value="Phospholipase D/nuclease"/>
    <property type="match status" value="2"/>
</dbReference>
<dbReference type="PROSITE" id="PS50035">
    <property type="entry name" value="PLD"/>
    <property type="match status" value="2"/>
</dbReference>
<gene>
    <name type="primary">PLD3</name>
</gene>
<sequence>MKPKLMYQELKVPAEEPASELPMNEIEAWKAAEKKARWVLLVLILAVVGFGALMTQLFLWEYGDLHLFGPNQRPAPCYDPCEAVLVESIPEGLDFPNASTSNPSTSQAWLGLLAGAHSSLDIASFYWTLTNNDTHTQEASAQQGEEVLRQLQTLAPRGVKVRIAVSKPNGPQPQADLQALLQSGAQVRMVDMQKLTHGVLHTKFWVVDQTHFYLGSANMDWRSLTQVKELGVVMYNCSCLARDLTKIFEAYWFLGQAGSSIPSTWPRPYDTRYNQETPMEICLNGTPALAYLASAPPPLCPSGRTPDLKALLNVVDNARSFIYIAVMNYLPIMEFSHPRRFWPAIDDGLRRAAYERGVKVRLLISCWGHSDPSMRAFLLSLAALRDNHTHSDIQVKLFVVPADDAQARIPYARVNHNKYMVTERATYIGTSNWSGSYFTETAGTSLLVTQNGRGGLRSQLEAVFLRDWDSPYSHDLDAAADSVGNACRLL</sequence>